<dbReference type="EMBL" id="AJ005798">
    <property type="protein sequence ID" value="CAA06702.1"/>
    <property type="molecule type" value="mRNA"/>
</dbReference>
<dbReference type="EMBL" id="AJ005797">
    <property type="protein sequence ID" value="CAA06701.1"/>
    <property type="molecule type" value="mRNA"/>
</dbReference>
<dbReference type="RefSeq" id="NP_999355.1">
    <molecule id="O97716-2"/>
    <property type="nucleotide sequence ID" value="NM_214190.1"/>
</dbReference>
<dbReference type="RefSeq" id="XP_020921902.1">
    <molecule id="O97716-2"/>
    <property type="nucleotide sequence ID" value="XM_021066243.1"/>
</dbReference>
<dbReference type="RefSeq" id="XP_020921903.1">
    <molecule id="O97716-2"/>
    <property type="nucleotide sequence ID" value="XM_021066244.1"/>
</dbReference>
<dbReference type="RefSeq" id="XP_020921904.1">
    <molecule id="O97716-2"/>
    <property type="nucleotide sequence ID" value="XM_021066245.1"/>
</dbReference>
<dbReference type="SMR" id="O97716"/>
<dbReference type="FunCoup" id="O97716">
    <property type="interactions" value="571"/>
</dbReference>
<dbReference type="STRING" id="9823.ENSSSCP00000071017"/>
<dbReference type="GlyGen" id="O97716">
    <property type="glycosylation" value="1 site"/>
</dbReference>
<dbReference type="Ensembl" id="ENSSSCT00000047067.3">
    <molecule id="O97716-2"/>
    <property type="protein sequence ID" value="ENSSSCP00000036874.1"/>
    <property type="gene ID" value="ENSSSCG00000035969.3"/>
</dbReference>
<dbReference type="Ensembl" id="ENSSSCT00000060832.2">
    <molecule id="O97716-1"/>
    <property type="protein sequence ID" value="ENSSSCP00000032431.1"/>
    <property type="gene ID" value="ENSSSCG00000035969.3"/>
</dbReference>
<dbReference type="Ensembl" id="ENSSSCT00015025497.1">
    <molecule id="O97716-1"/>
    <property type="protein sequence ID" value="ENSSSCP00015009958.1"/>
    <property type="gene ID" value="ENSSSCG00015019223.1"/>
</dbReference>
<dbReference type="Ensembl" id="ENSSSCT00015025551.1">
    <molecule id="O97716-1"/>
    <property type="protein sequence ID" value="ENSSSCP00015009979.1"/>
    <property type="gene ID" value="ENSSSCG00015019223.1"/>
</dbReference>
<dbReference type="Ensembl" id="ENSSSCT00025091091.1">
    <molecule id="O97716-1"/>
    <property type="protein sequence ID" value="ENSSSCP00025039926.1"/>
    <property type="gene ID" value="ENSSSCG00025066098.1"/>
</dbReference>
<dbReference type="Ensembl" id="ENSSSCT00025091278.1">
    <molecule id="O97716-2"/>
    <property type="protein sequence ID" value="ENSSSCP00025040035.1"/>
    <property type="gene ID" value="ENSSSCG00025066098.1"/>
</dbReference>
<dbReference type="Ensembl" id="ENSSSCT00030049889.1">
    <molecule id="O97716-1"/>
    <property type="protein sequence ID" value="ENSSSCP00030022664.1"/>
    <property type="gene ID" value="ENSSSCG00030035812.1"/>
</dbReference>
<dbReference type="Ensembl" id="ENSSSCT00030049909.1">
    <molecule id="O97716-1"/>
    <property type="protein sequence ID" value="ENSSSCP00030022679.1"/>
    <property type="gene ID" value="ENSSSCG00030035812.1"/>
</dbReference>
<dbReference type="Ensembl" id="ENSSSCT00030049980.1">
    <molecule id="O97716-1"/>
    <property type="protein sequence ID" value="ENSSSCP00030022726.1"/>
    <property type="gene ID" value="ENSSSCG00030035812.1"/>
</dbReference>
<dbReference type="Ensembl" id="ENSSSCT00035066516.1">
    <molecule id="O97716-1"/>
    <property type="protein sequence ID" value="ENSSSCP00035026974.1"/>
    <property type="gene ID" value="ENSSSCG00035049912.1"/>
</dbReference>
<dbReference type="Ensembl" id="ENSSSCT00035066570.1">
    <molecule id="O97716-2"/>
    <property type="protein sequence ID" value="ENSSSCP00035027002.1"/>
    <property type="gene ID" value="ENSSSCG00035049912.1"/>
</dbReference>
<dbReference type="Ensembl" id="ENSSSCT00040005431.1">
    <molecule id="O97716-1"/>
    <property type="protein sequence ID" value="ENSSSCP00040001975.1"/>
    <property type="gene ID" value="ENSSSCG00040004192.1"/>
</dbReference>
<dbReference type="Ensembl" id="ENSSSCT00040005437.1">
    <molecule id="O97716-2"/>
    <property type="protein sequence ID" value="ENSSSCP00040001979.1"/>
    <property type="gene ID" value="ENSSSCG00040004192.1"/>
</dbReference>
<dbReference type="Ensembl" id="ENSSSCT00045060844.1">
    <molecule id="O97716-1"/>
    <property type="protein sequence ID" value="ENSSSCP00045042736.1"/>
    <property type="gene ID" value="ENSSSCG00045035402.1"/>
</dbReference>
<dbReference type="Ensembl" id="ENSSSCT00045061283.1">
    <molecule id="O97716-2"/>
    <property type="protein sequence ID" value="ENSSSCP00045043050.1"/>
    <property type="gene ID" value="ENSSSCG00045035402.1"/>
</dbReference>
<dbReference type="Ensembl" id="ENSSSCT00050101087.1">
    <molecule id="O97716-2"/>
    <property type="protein sequence ID" value="ENSSSCP00050043926.1"/>
    <property type="gene ID" value="ENSSSCG00050073891.1"/>
</dbReference>
<dbReference type="Ensembl" id="ENSSSCT00050101093.1">
    <molecule id="O97716-1"/>
    <property type="protein sequence ID" value="ENSSSCP00050043930.1"/>
    <property type="gene ID" value="ENSSSCG00050073891.1"/>
</dbReference>
<dbReference type="Ensembl" id="ENSSSCT00055004638.1">
    <molecule id="O97716-1"/>
    <property type="protein sequence ID" value="ENSSSCP00055003578.1"/>
    <property type="gene ID" value="ENSSSCG00055002444.1"/>
</dbReference>
<dbReference type="Ensembl" id="ENSSSCT00055004765.1">
    <molecule id="O97716-2"/>
    <property type="protein sequence ID" value="ENSSSCP00055003687.1"/>
    <property type="gene ID" value="ENSSSCG00055002444.1"/>
</dbReference>
<dbReference type="Ensembl" id="ENSSSCT00060102103.1">
    <molecule id="O97716-1"/>
    <property type="protein sequence ID" value="ENSSSCP00060044427.1"/>
    <property type="gene ID" value="ENSSSCG00060074529.1"/>
</dbReference>
<dbReference type="Ensembl" id="ENSSSCT00060102164.1">
    <molecule id="O97716-2"/>
    <property type="protein sequence ID" value="ENSSSCP00060044461.1"/>
    <property type="gene ID" value="ENSSSCG00060074529.1"/>
</dbReference>
<dbReference type="Ensembl" id="ENSSSCT00065005721.1">
    <molecule id="O97716-1"/>
    <property type="protein sequence ID" value="ENSSSCP00065002539.1"/>
    <property type="gene ID" value="ENSSSCG00065004151.1"/>
</dbReference>
<dbReference type="Ensembl" id="ENSSSCT00065005724.1">
    <molecule id="O97716-1"/>
    <property type="protein sequence ID" value="ENSSSCP00065002540.1"/>
    <property type="gene ID" value="ENSSSCG00065004151.1"/>
</dbReference>
<dbReference type="Ensembl" id="ENSSSCT00065005735.1">
    <molecule id="O97716-1"/>
    <property type="protein sequence ID" value="ENSSSCP00065002544.1"/>
    <property type="gene ID" value="ENSSSCG00065004151.1"/>
</dbReference>
<dbReference type="Ensembl" id="ENSSSCT00070031832.1">
    <molecule id="O97716-1"/>
    <property type="protein sequence ID" value="ENSSSCP00070026538.1"/>
    <property type="gene ID" value="ENSSSCG00070016193.1"/>
</dbReference>
<dbReference type="Ensembl" id="ENSSSCT00115039673">
    <molecule id="O97716-1"/>
    <property type="protein sequence ID" value="ENSSSCP00115037376"/>
    <property type="gene ID" value="ENSSSCG00115022411"/>
</dbReference>
<dbReference type="GeneID" id="397387"/>
<dbReference type="KEGG" id="ssc:397387"/>
<dbReference type="CTD" id="7067"/>
<dbReference type="GeneTree" id="ENSGT00940000157917"/>
<dbReference type="InParanoid" id="O97716"/>
<dbReference type="OMA" id="IMCLRIA"/>
<dbReference type="OrthoDB" id="6081310at2759"/>
<dbReference type="Reactome" id="R-SSC-383280">
    <property type="pathway name" value="Nuclear Receptor transcription pathway"/>
</dbReference>
<dbReference type="Reactome" id="R-SSC-4090294">
    <property type="pathway name" value="SUMOylation of intracellular receptors"/>
</dbReference>
<dbReference type="Proteomes" id="UP000008227">
    <property type="component" value="Chromosome 12"/>
</dbReference>
<dbReference type="Proteomes" id="UP000314985">
    <property type="component" value="Chromosome 12"/>
</dbReference>
<dbReference type="Proteomes" id="UP000694570">
    <property type="component" value="Unplaced"/>
</dbReference>
<dbReference type="Proteomes" id="UP000694571">
    <property type="component" value="Unplaced"/>
</dbReference>
<dbReference type="Proteomes" id="UP000694720">
    <property type="component" value="Unplaced"/>
</dbReference>
<dbReference type="Proteomes" id="UP000694722">
    <property type="component" value="Unplaced"/>
</dbReference>
<dbReference type="Proteomes" id="UP000694723">
    <property type="component" value="Unplaced"/>
</dbReference>
<dbReference type="Proteomes" id="UP000694724">
    <property type="component" value="Unplaced"/>
</dbReference>
<dbReference type="Proteomes" id="UP000694725">
    <property type="component" value="Unplaced"/>
</dbReference>
<dbReference type="Proteomes" id="UP000694726">
    <property type="component" value="Unplaced"/>
</dbReference>
<dbReference type="Proteomes" id="UP000694727">
    <property type="component" value="Unplaced"/>
</dbReference>
<dbReference type="Proteomes" id="UP000694728">
    <property type="component" value="Unplaced"/>
</dbReference>
<dbReference type="Bgee" id="ENSSSCG00000035969">
    <property type="expression patterns" value="Expressed in prefrontal cortex and 44 other cell types or tissues"/>
</dbReference>
<dbReference type="ExpressionAtlas" id="O97716">
    <property type="expression patterns" value="baseline and differential"/>
</dbReference>
<dbReference type="GO" id="GO:0005737">
    <property type="term" value="C:cytoplasm"/>
    <property type="evidence" value="ECO:0007669"/>
    <property type="project" value="UniProtKB-SubCell"/>
</dbReference>
<dbReference type="GO" id="GO:0005634">
    <property type="term" value="C:nucleus"/>
    <property type="evidence" value="ECO:0000318"/>
    <property type="project" value="GO_Central"/>
</dbReference>
<dbReference type="GO" id="GO:0090575">
    <property type="term" value="C:RNA polymerase II transcription regulator complex"/>
    <property type="evidence" value="ECO:0000318"/>
    <property type="project" value="GO_Central"/>
</dbReference>
<dbReference type="GO" id="GO:0004879">
    <property type="term" value="F:nuclear receptor activity"/>
    <property type="evidence" value="ECO:0000250"/>
    <property type="project" value="UniProtKB"/>
</dbReference>
<dbReference type="GO" id="GO:0000978">
    <property type="term" value="F:RNA polymerase II cis-regulatory region sequence-specific DNA binding"/>
    <property type="evidence" value="ECO:0000318"/>
    <property type="project" value="GO_Central"/>
</dbReference>
<dbReference type="GO" id="GO:0070324">
    <property type="term" value="F:thyroid hormone binding"/>
    <property type="evidence" value="ECO:0000250"/>
    <property type="project" value="UniProtKB"/>
</dbReference>
<dbReference type="GO" id="GO:0008270">
    <property type="term" value="F:zinc ion binding"/>
    <property type="evidence" value="ECO:0007669"/>
    <property type="project" value="UniProtKB-KW"/>
</dbReference>
<dbReference type="GO" id="GO:0030154">
    <property type="term" value="P:cell differentiation"/>
    <property type="evidence" value="ECO:0000318"/>
    <property type="project" value="GO_Central"/>
</dbReference>
<dbReference type="GO" id="GO:0000122">
    <property type="term" value="P:negative regulation of transcription by RNA polymerase II"/>
    <property type="evidence" value="ECO:0000318"/>
    <property type="project" value="GO_Central"/>
</dbReference>
<dbReference type="GO" id="GO:0045944">
    <property type="term" value="P:positive regulation of transcription by RNA polymerase II"/>
    <property type="evidence" value="ECO:0000318"/>
    <property type="project" value="GO_Central"/>
</dbReference>
<dbReference type="GO" id="GO:0048384">
    <property type="term" value="P:retinoic acid receptor signaling pathway"/>
    <property type="evidence" value="ECO:0000318"/>
    <property type="project" value="GO_Central"/>
</dbReference>
<dbReference type="GO" id="GO:0002154">
    <property type="term" value="P:thyroid hormone receptor signaling pathway"/>
    <property type="evidence" value="ECO:0000318"/>
    <property type="project" value="GO_Central"/>
</dbReference>
<dbReference type="CDD" id="cd06961">
    <property type="entry name" value="NR_DBD_TR"/>
    <property type="match status" value="1"/>
</dbReference>
<dbReference type="CDD" id="cd06935">
    <property type="entry name" value="NR_LBD_TR"/>
    <property type="match status" value="1"/>
</dbReference>
<dbReference type="FunFam" id="1.10.565.10:FF:000006">
    <property type="entry name" value="Thyroid hormone receptor beta 2"/>
    <property type="match status" value="1"/>
</dbReference>
<dbReference type="FunFam" id="3.30.50.10:FF:000011">
    <property type="entry name" value="Thyroid hormone receptor beta isoform"/>
    <property type="match status" value="1"/>
</dbReference>
<dbReference type="Gene3D" id="3.30.50.10">
    <property type="entry name" value="Erythroid Transcription Factor GATA-1, subunit A"/>
    <property type="match status" value="1"/>
</dbReference>
<dbReference type="Gene3D" id="1.10.565.10">
    <property type="entry name" value="Retinoid X Receptor"/>
    <property type="match status" value="1"/>
</dbReference>
<dbReference type="InterPro" id="IPR035500">
    <property type="entry name" value="NHR-like_dom_sf"/>
</dbReference>
<dbReference type="InterPro" id="IPR000536">
    <property type="entry name" value="Nucl_hrmn_rcpt_lig-bd"/>
</dbReference>
<dbReference type="InterPro" id="IPR050234">
    <property type="entry name" value="Nuclear_hormone_rcpt_NR1"/>
</dbReference>
<dbReference type="InterPro" id="IPR001723">
    <property type="entry name" value="Nuclear_hrmn_rcpt"/>
</dbReference>
<dbReference type="InterPro" id="IPR001728">
    <property type="entry name" value="ThyrH_rcpt"/>
</dbReference>
<dbReference type="InterPro" id="IPR001628">
    <property type="entry name" value="Znf_hrmn_rcpt"/>
</dbReference>
<dbReference type="InterPro" id="IPR013088">
    <property type="entry name" value="Znf_NHR/GATA"/>
</dbReference>
<dbReference type="PANTHER" id="PTHR24082">
    <property type="entry name" value="NUCLEAR HORMONE RECEPTOR"/>
    <property type="match status" value="1"/>
</dbReference>
<dbReference type="PANTHER" id="PTHR24082:SF42">
    <property type="entry name" value="THYROID HORMONE RECEPTOR ALPHA"/>
    <property type="match status" value="1"/>
</dbReference>
<dbReference type="Pfam" id="PF00104">
    <property type="entry name" value="Hormone_recep"/>
    <property type="match status" value="1"/>
</dbReference>
<dbReference type="Pfam" id="PF00105">
    <property type="entry name" value="zf-C4"/>
    <property type="match status" value="1"/>
</dbReference>
<dbReference type="PRINTS" id="PR00398">
    <property type="entry name" value="STRDHORMONER"/>
</dbReference>
<dbReference type="PRINTS" id="PR00047">
    <property type="entry name" value="STROIDFINGER"/>
</dbReference>
<dbReference type="PRINTS" id="PR00546">
    <property type="entry name" value="THYROIDHORMR"/>
</dbReference>
<dbReference type="SMART" id="SM00430">
    <property type="entry name" value="HOLI"/>
    <property type="match status" value="1"/>
</dbReference>
<dbReference type="SMART" id="SM00399">
    <property type="entry name" value="ZnF_C4"/>
    <property type="match status" value="1"/>
</dbReference>
<dbReference type="SUPFAM" id="SSF57716">
    <property type="entry name" value="Glucocorticoid receptor-like (DNA-binding domain)"/>
    <property type="match status" value="1"/>
</dbReference>
<dbReference type="SUPFAM" id="SSF48508">
    <property type="entry name" value="Nuclear receptor ligand-binding domain"/>
    <property type="match status" value="1"/>
</dbReference>
<dbReference type="PROSITE" id="PS51843">
    <property type="entry name" value="NR_LBD"/>
    <property type="match status" value="1"/>
</dbReference>
<dbReference type="PROSITE" id="PS00031">
    <property type="entry name" value="NUCLEAR_REC_DBD_1"/>
    <property type="match status" value="1"/>
</dbReference>
<dbReference type="PROSITE" id="PS51030">
    <property type="entry name" value="NUCLEAR_REC_DBD_2"/>
    <property type="match status" value="1"/>
</dbReference>
<sequence length="506" mass="56265">MEQKPSKVECGSDPEENSARSPDGKRKRKNGQCSLKTSMSGYIPSYLDKDEQCVVCGDKATGYHYRCITCEGCKGFFRRTIQKNLHPTYSCKYDSCCVIDKITRNQCQLCRFKKCIAVGMAMDLVLDDSKRVAKRKLIEQNRERRRKEEMIRSLQQRPEPTPEEWDLIHVATEAHRSTNAQGSHWKQRRKFLPDDIGQSPIVSMPDGDKVDLEAFSEFTKIITPAITRVVDFAKKLPMFSELPCEDQIILLKGCCMEIMSLRAAVRYDPESDTLTLSGEMAVKREQLKNGGLGVVSDAIFELGKSLSAFNLDDTEVALLQAVLLMSTDRSGLLCVDKIEKSQEAYLLAFEHYVNHRKHNIPHFWPKLLMKEREVQSSILYKGAAAEGRPGGSLGVHPEGQQLLGMHVVQGPQVRQLEQQLGEAGSLRGPVLQHQSPKSPQQRLLELLHRSGILHARAVCGEDDSSEAGSLTSSDEDPEVCEDAAQATQPLPEAPPRADGEGGGGGS</sequence>
<organism>
    <name type="scientific">Sus scrofa</name>
    <name type="common">Pig</name>
    <dbReference type="NCBI Taxonomy" id="9823"/>
    <lineage>
        <taxon>Eukaryota</taxon>
        <taxon>Metazoa</taxon>
        <taxon>Chordata</taxon>
        <taxon>Craniata</taxon>
        <taxon>Vertebrata</taxon>
        <taxon>Euteleostomi</taxon>
        <taxon>Mammalia</taxon>
        <taxon>Eutheria</taxon>
        <taxon>Laurasiatheria</taxon>
        <taxon>Artiodactyla</taxon>
        <taxon>Suina</taxon>
        <taxon>Suidae</taxon>
        <taxon>Sus</taxon>
    </lineage>
</organism>
<proteinExistence type="evidence at transcript level"/>
<comment type="function">
    <text>Nuclear hormone receptor that can act as a repressor or activator of transcription. High affinity receptor for thyroid hormones, including triiodothyronine and thyroxine.</text>
</comment>
<comment type="subunit">
    <text evidence="1 2">Binds DNA as a dimer; homodimer and heterodimer with RXRB. Interacts with NCOA3 and NCOA6 coactivators, leading to a strong increase of transcription of target genes. Probably interacts with SFPQ. Interacts with C1D. Interacts with AKAP13. Interacts with TP53INP2. Interacts with PER2 (By similarity). Interacts with PER2. Isoform alpha-2 and isoform alpha-1 interact with TACC1, but the interaction with alpha-1 is weaker. The interaction with isoform alpha-1, but not alpha-2, is decreased in the presence of thyroid hormone T3 (By similarity).</text>
</comment>
<comment type="subcellular location">
    <subcellularLocation>
        <location>Nucleus</location>
    </subcellularLocation>
</comment>
<comment type="subcellular location">
    <molecule>Isoform Alpha-2</molecule>
    <subcellularLocation>
        <location evidence="4">Cytoplasm</location>
    </subcellularLocation>
    <subcellularLocation>
        <location evidence="4">Nucleus</location>
    </subcellularLocation>
    <text evidence="4">When overexpressed found in the cytoplasm where it colocalizes with TACC1.</text>
</comment>
<comment type="alternative products">
    <event type="alternative splicing"/>
    <isoform>
        <id>O97716-1</id>
        <name>Alpha-2</name>
        <sequence type="displayed"/>
    </isoform>
    <isoform>
        <id>O97716-2</id>
        <name>Alpha-1</name>
        <sequence type="described" ref="VSP_003626"/>
    </isoform>
</comment>
<comment type="domain">
    <text>Composed of three domains: a modulating N-terminal domain, a DNA-binding domain and a C-terminal ligand-binding domain.</text>
</comment>
<comment type="miscellaneous">
    <molecule>Isoform Alpha-2</molecule>
    <text evidence="9">Does not bind thyroid hormone T3.</text>
</comment>
<comment type="similarity">
    <text evidence="9">Belongs to the nuclear hormone receptor family. NR1 subfamily.</text>
</comment>
<feature type="chain" id="PRO_0000053426" description="Thyroid hormone receptor alpha">
    <location>
        <begin position="1"/>
        <end position="506"/>
    </location>
</feature>
<feature type="domain" description="NR LBD" evidence="6">
    <location>
        <begin position="163"/>
        <end position="407"/>
    </location>
</feature>
<feature type="DNA-binding region" description="Nuclear receptor" evidence="5">
    <location>
        <begin position="53"/>
        <end position="127"/>
    </location>
</feature>
<feature type="zinc finger region" description="NR C4-type" evidence="5">
    <location>
        <begin position="53"/>
        <end position="73"/>
    </location>
</feature>
<feature type="zinc finger region" description="NR C4-type" evidence="5">
    <location>
        <begin position="91"/>
        <end position="115"/>
    </location>
</feature>
<feature type="region of interest" description="Modulating">
    <location>
        <begin position="1"/>
        <end position="52"/>
    </location>
</feature>
<feature type="region of interest" description="Disordered" evidence="7">
    <location>
        <begin position="1"/>
        <end position="32"/>
    </location>
</feature>
<feature type="region of interest" description="Disordered" evidence="7">
    <location>
        <begin position="460"/>
        <end position="506"/>
    </location>
</feature>
<feature type="binding site" evidence="3">
    <location>
        <position position="53"/>
    </location>
    <ligand>
        <name>Zn(2+)</name>
        <dbReference type="ChEBI" id="CHEBI:29105"/>
        <label>1</label>
    </ligand>
</feature>
<feature type="binding site" evidence="3">
    <location>
        <position position="56"/>
    </location>
    <ligand>
        <name>Zn(2+)</name>
        <dbReference type="ChEBI" id="CHEBI:29105"/>
        <label>1</label>
    </ligand>
</feature>
<feature type="binding site" evidence="3">
    <location>
        <position position="70"/>
    </location>
    <ligand>
        <name>Zn(2+)</name>
        <dbReference type="ChEBI" id="CHEBI:29105"/>
        <label>1</label>
    </ligand>
</feature>
<feature type="binding site" evidence="3">
    <location>
        <position position="73"/>
    </location>
    <ligand>
        <name>Zn(2+)</name>
        <dbReference type="ChEBI" id="CHEBI:29105"/>
        <label>1</label>
    </ligand>
</feature>
<feature type="binding site" evidence="3">
    <location>
        <position position="91"/>
    </location>
    <ligand>
        <name>Zn(2+)</name>
        <dbReference type="ChEBI" id="CHEBI:29105"/>
        <label>2</label>
    </ligand>
</feature>
<feature type="binding site" evidence="3">
    <location>
        <position position="97"/>
    </location>
    <ligand>
        <name>Zn(2+)</name>
        <dbReference type="ChEBI" id="CHEBI:29105"/>
        <label>2</label>
    </ligand>
</feature>
<feature type="binding site" evidence="3">
    <location>
        <position position="107"/>
    </location>
    <ligand>
        <name>Zn(2+)</name>
        <dbReference type="ChEBI" id="CHEBI:29105"/>
        <label>2</label>
    </ligand>
</feature>
<feature type="binding site" evidence="3">
    <location>
        <position position="110"/>
    </location>
    <ligand>
        <name>Zn(2+)</name>
        <dbReference type="ChEBI" id="CHEBI:29105"/>
        <label>2</label>
    </ligand>
</feature>
<feature type="binding site" evidence="2">
    <location>
        <position position="228"/>
    </location>
    <ligand>
        <name>3,3',5-triiodo-L-thyronine</name>
        <dbReference type="ChEBI" id="CHEBI:533015"/>
    </ligand>
</feature>
<feature type="binding site" evidence="2">
    <location>
        <position position="277"/>
    </location>
    <ligand>
        <name>3,3',5-triiodo-L-thyronine</name>
        <dbReference type="ChEBI" id="CHEBI:533015"/>
    </ligand>
</feature>
<feature type="splice variant" id="VSP_003626" description="In isoform Alpha-1." evidence="8">
    <original>EREVQSSILYKGAAAEGRPGGSLGVHPEGQQLLGMHVVQGPQVRQLEQQLGEAGSLRGPVLQHQSPKSPQQRLLELLHRSGILHARAVCGEDDSSEAGSLTSSDEDPEVCEDAAQATQPLPEAPPRADGEGGGGGS</original>
    <variation>VTDLRMIGACHASRFLHMKVECPTELFPPLFLEVFEDQEV</variation>
    <location>
        <begin position="371"/>
        <end position="506"/>
    </location>
</feature>
<keyword id="KW-0025">Alternative splicing</keyword>
<keyword id="KW-0963">Cytoplasm</keyword>
<keyword id="KW-0238">DNA-binding</keyword>
<keyword id="KW-0479">Metal-binding</keyword>
<keyword id="KW-0539">Nucleus</keyword>
<keyword id="KW-0675">Receptor</keyword>
<keyword id="KW-1185">Reference proteome</keyword>
<keyword id="KW-0804">Transcription</keyword>
<keyword id="KW-0805">Transcription regulation</keyword>
<keyword id="KW-0862">Zinc</keyword>
<keyword id="KW-0863">Zinc-finger</keyword>
<accession>O97716</accession>
<accession>O97715</accession>
<evidence type="ECO:0000250" key="1"/>
<evidence type="ECO:0000250" key="2">
    <source>
        <dbReference type="UniProtKB" id="P10827"/>
    </source>
</evidence>
<evidence type="ECO:0000250" key="3">
    <source>
        <dbReference type="UniProtKB" id="P10828"/>
    </source>
</evidence>
<evidence type="ECO:0000250" key="4">
    <source>
        <dbReference type="UniProtKB" id="P63058"/>
    </source>
</evidence>
<evidence type="ECO:0000255" key="5">
    <source>
        <dbReference type="PROSITE-ProRule" id="PRU00407"/>
    </source>
</evidence>
<evidence type="ECO:0000255" key="6">
    <source>
        <dbReference type="PROSITE-ProRule" id="PRU01189"/>
    </source>
</evidence>
<evidence type="ECO:0000256" key="7">
    <source>
        <dbReference type="SAM" id="MobiDB-lite"/>
    </source>
</evidence>
<evidence type="ECO:0000303" key="8">
    <source ref="1"/>
</evidence>
<evidence type="ECO:0000305" key="9"/>
<name>THA_PIG</name>
<gene>
    <name type="primary">THRA</name>
    <name type="synonym">NR1A1</name>
</gene>
<reference key="1">
    <citation type="submission" date="1998-05" db="EMBL/GenBank/DDBJ databases">
        <title>Differential expression of alpha 1 and alpha 2 thyroid hormone receptor isoforms in porcine cardiac and skeletal muscles postnatally.</title>
        <authorList>
            <person name="White P."/>
            <person name="Dauncey M.J."/>
        </authorList>
    </citation>
    <scope>NUCLEOTIDE SEQUENCE [MRNA] (ISOFORMS ALPHA-1 AND ALPHA-2)</scope>
    <source>
        <strain>Large white</strain>
        <tissue>Heart</tissue>
    </source>
</reference>
<protein>
    <recommendedName>
        <fullName>Thyroid hormone receptor alpha</fullName>
    </recommendedName>
    <alternativeName>
        <fullName>Nuclear receptor subfamily 1 group A member 1</fullName>
    </alternativeName>
    <alternativeName>
        <fullName>c-erbA-1</fullName>
    </alternativeName>
    <alternativeName>
        <fullName>c-erbA-alpha</fullName>
    </alternativeName>
</protein>